<feature type="chain" id="PRO_0000152804" description="Phosphomethylpyrimidine synthase">
    <location>
        <begin position="1"/>
        <end position="631"/>
    </location>
</feature>
<feature type="binding site" evidence="1">
    <location>
        <position position="239"/>
    </location>
    <ligand>
        <name>substrate</name>
    </ligand>
</feature>
<feature type="binding site" evidence="1">
    <location>
        <position position="268"/>
    </location>
    <ligand>
        <name>substrate</name>
    </ligand>
</feature>
<feature type="binding site" evidence="1">
    <location>
        <position position="297"/>
    </location>
    <ligand>
        <name>substrate</name>
    </ligand>
</feature>
<feature type="binding site" evidence="1">
    <location>
        <position position="333"/>
    </location>
    <ligand>
        <name>substrate</name>
    </ligand>
</feature>
<feature type="binding site" evidence="1">
    <location>
        <begin position="353"/>
        <end position="355"/>
    </location>
    <ligand>
        <name>substrate</name>
    </ligand>
</feature>
<feature type="binding site" evidence="1">
    <location>
        <begin position="394"/>
        <end position="397"/>
    </location>
    <ligand>
        <name>substrate</name>
    </ligand>
</feature>
<feature type="binding site" evidence="1">
    <location>
        <position position="433"/>
    </location>
    <ligand>
        <name>substrate</name>
    </ligand>
</feature>
<feature type="binding site" evidence="1">
    <location>
        <position position="437"/>
    </location>
    <ligand>
        <name>Zn(2+)</name>
        <dbReference type="ChEBI" id="CHEBI:29105"/>
    </ligand>
</feature>
<feature type="binding site" evidence="1">
    <location>
        <position position="460"/>
    </location>
    <ligand>
        <name>substrate</name>
    </ligand>
</feature>
<feature type="binding site" evidence="1">
    <location>
        <position position="501"/>
    </location>
    <ligand>
        <name>Zn(2+)</name>
        <dbReference type="ChEBI" id="CHEBI:29105"/>
    </ligand>
</feature>
<feature type="binding site" evidence="1">
    <location>
        <position position="581"/>
    </location>
    <ligand>
        <name>[4Fe-4S] cluster</name>
        <dbReference type="ChEBI" id="CHEBI:49883"/>
        <note>4Fe-4S-S-AdoMet</note>
    </ligand>
</feature>
<feature type="binding site" evidence="1">
    <location>
        <position position="584"/>
    </location>
    <ligand>
        <name>[4Fe-4S] cluster</name>
        <dbReference type="ChEBI" id="CHEBI:49883"/>
        <note>4Fe-4S-S-AdoMet</note>
    </ligand>
</feature>
<feature type="binding site" evidence="1">
    <location>
        <position position="589"/>
    </location>
    <ligand>
        <name>[4Fe-4S] cluster</name>
        <dbReference type="ChEBI" id="CHEBI:49883"/>
        <note>4Fe-4S-S-AdoMet</note>
    </ligand>
</feature>
<feature type="sequence conflict" description="In Ref. 1; AAB95616." evidence="2" ref="1">
    <original>EIYLRKEE</original>
    <variation>RNLP</variation>
    <location>
        <begin position="623"/>
        <end position="630"/>
    </location>
</feature>
<sequence length="631" mass="70850">MSATKLTRREQRARAQHFIDTLEGTAFPNSKRIYITGTHPGVRVPMREIQLSPTLIGGSKEQPQYEENEAIPVYDTSGPYGDPQIAINVQQGLAKLRQPWIDARGDTEELTVRSSDYTKARLADDGLDELRFSGVLTPKRAKAGRRVTQLHYARQGIITPEMEFIAIRENMGRERIRSEVLRHQHPGMSFGAHLPENITAEFVRDEVAAGRAIIPANINHPESEPMIIGRNFLVKVNANIGNSAVTSSIEEEVEKLVWSTRWGADTVMDLSTGRYIHETREWILRNSPVPIGTVPIYQALEKVNGIAEDLTWEAFRDTLLEQAEQGVDYFTIHAGVLLRYVPMTAKRLTGIVSRGGSIMAKWCLSHHQENFLYQHFREICEICAAYDVSLSLGDGLRPGSIQDANDEAQFAELHTLGELTKIAWEYDVQVMIEGPGHVPMQMIRRNMTEELEHCHEAPFYTLGPLTTDIAPGYDHFTSGIGAAMIGWFGCAMLCYVTPKEHLGLPNKEDVKQGLITYKIAAHAADLAKGHPGAQIRDNAMSKARFEFRWEDQFNLALDPFTARAYHDETLPQESGKVAHFCSMCGPKFCSMKISQEVRDYAATQTIEMGMADMSENFRARGGEIYLRKEEA</sequence>
<comment type="function">
    <text evidence="3 4">Catalyzes the synthesis of the hydroxymethylpyrimidine phosphate (HMP-P) moiety of thiamine from aminoimidazole ribotide (AIR) in a radical S-adenosyl-L-methionine (SAM)-dependent reaction.</text>
</comment>
<comment type="catalytic activity">
    <reaction evidence="1">
        <text>5-amino-1-(5-phospho-beta-D-ribosyl)imidazole + S-adenosyl-L-methionine = 4-amino-2-methyl-5-(phosphooxymethyl)pyrimidine + CO + 5'-deoxyadenosine + formate + L-methionine + 3 H(+)</text>
        <dbReference type="Rhea" id="RHEA:24840"/>
        <dbReference type="ChEBI" id="CHEBI:15378"/>
        <dbReference type="ChEBI" id="CHEBI:15740"/>
        <dbReference type="ChEBI" id="CHEBI:17245"/>
        <dbReference type="ChEBI" id="CHEBI:17319"/>
        <dbReference type="ChEBI" id="CHEBI:57844"/>
        <dbReference type="ChEBI" id="CHEBI:58354"/>
        <dbReference type="ChEBI" id="CHEBI:59789"/>
        <dbReference type="ChEBI" id="CHEBI:137981"/>
        <dbReference type="EC" id="4.1.99.17"/>
    </reaction>
</comment>
<comment type="cofactor">
    <cofactor evidence="1">
        <name>[4Fe-4S] cluster</name>
        <dbReference type="ChEBI" id="CHEBI:49883"/>
    </cofactor>
    <text evidence="1">Binds 1 [4Fe-4S] cluster per subunit. The cluster is coordinated with 3 cysteines and an exchangeable S-adenosyl-L-methionine.</text>
</comment>
<comment type="pathway">
    <text evidence="1">Cofactor biosynthesis; thiamine diphosphate biosynthesis.</text>
</comment>
<comment type="subunit">
    <text evidence="1">Homodimer.</text>
</comment>
<comment type="similarity">
    <text evidence="1">Belongs to the ThiC family.</text>
</comment>
<reference key="1">
    <citation type="journal article" date="1993" name="J. Bacteriol.">
        <title>Structural genes for thiamine biosynthetic enzymes (thiCEFGH) in Escherichia coli K-12.</title>
        <authorList>
            <person name="Vander Horn P.B."/>
            <person name="Backstrom A.D."/>
            <person name="Stewart V."/>
            <person name="Begley T.P."/>
        </authorList>
    </citation>
    <scope>NUCLEOTIDE SEQUENCE [GENOMIC DNA]</scope>
    <source>
        <strain>K12</strain>
    </source>
</reference>
<reference key="2">
    <citation type="journal article" date="1993" name="Nucleic Acids Res.">
        <title>Analysis of the Escherichia coli genome. IV. DNA sequence of the region from 89.2 to 92.8 minutes.</title>
        <authorList>
            <person name="Blattner F.R."/>
            <person name="Burland V.D."/>
            <person name="Plunkett G. III"/>
            <person name="Sofia H.J."/>
            <person name="Daniels D.L."/>
        </authorList>
    </citation>
    <scope>NUCLEOTIDE SEQUENCE [LARGE SCALE GENOMIC DNA]</scope>
    <source>
        <strain>K12 / MG1655 / ATCC 47076</strain>
    </source>
</reference>
<reference key="3">
    <citation type="journal article" date="1997" name="Science">
        <title>The complete genome sequence of Escherichia coli K-12.</title>
        <authorList>
            <person name="Blattner F.R."/>
            <person name="Plunkett G. III"/>
            <person name="Bloch C.A."/>
            <person name="Perna N.T."/>
            <person name="Burland V."/>
            <person name="Riley M."/>
            <person name="Collado-Vides J."/>
            <person name="Glasner J.D."/>
            <person name="Rode C.K."/>
            <person name="Mayhew G.F."/>
            <person name="Gregor J."/>
            <person name="Davis N.W."/>
            <person name="Kirkpatrick H.A."/>
            <person name="Goeden M.A."/>
            <person name="Rose D.J."/>
            <person name="Mau B."/>
            <person name="Shao Y."/>
        </authorList>
    </citation>
    <scope>NUCLEOTIDE SEQUENCE [LARGE SCALE GENOMIC DNA]</scope>
    <source>
        <strain>K12 / MG1655 / ATCC 47076</strain>
    </source>
</reference>
<reference key="4">
    <citation type="journal article" date="2004" name="J. Biol. Chem.">
        <title>A genetic screen for the identification of thiamin metabolic genes.</title>
        <authorList>
            <person name="Lawhorn B.G."/>
            <person name="Gerdes S.Y."/>
            <person name="Begley T.P."/>
        </authorList>
    </citation>
    <scope>FUNCTION IN THIAMINE METABOLISM</scope>
    <source>
        <strain>K12 / MG1655 / ATCC 47076</strain>
    </source>
</reference>
<reference key="5">
    <citation type="journal article" date="2004" name="Org. Biomol. Chem.">
        <title>Biosynthesis of the thiamin pyrimidine: the reconstitution of a remarkable rearrangement reaction.</title>
        <authorList>
            <person name="Lawhorn B.G."/>
            <person name="Mehl R.A."/>
            <person name="Begley T.P."/>
        </authorList>
    </citation>
    <scope>FUNCTION IN AIR CONVERSION</scope>
    <source>
        <strain>K12</strain>
    </source>
</reference>
<reference key="6">
    <citation type="journal article" date="2006" name="Mol. Syst. Biol.">
        <title>Highly accurate genome sequences of Escherichia coli K-12 strains MG1655 and W3110.</title>
        <authorList>
            <person name="Hayashi K."/>
            <person name="Morooka N."/>
            <person name="Yamamoto Y."/>
            <person name="Fujita K."/>
            <person name="Isono K."/>
            <person name="Choi S."/>
            <person name="Ohtsubo E."/>
            <person name="Baba T."/>
            <person name="Wanner B.L."/>
            <person name="Mori H."/>
            <person name="Horiuchi T."/>
        </authorList>
    </citation>
    <scope>NUCLEOTIDE SEQUENCE [LARGE SCALE GENOMIC DNA]</scope>
    <source>
        <strain>K12 / W3110 / ATCC 27325 / DSM 5911</strain>
    </source>
</reference>
<organism>
    <name type="scientific">Escherichia coli (strain K12)</name>
    <dbReference type="NCBI Taxonomy" id="83333"/>
    <lineage>
        <taxon>Bacteria</taxon>
        <taxon>Pseudomonadati</taxon>
        <taxon>Pseudomonadota</taxon>
        <taxon>Gammaproteobacteria</taxon>
        <taxon>Enterobacterales</taxon>
        <taxon>Enterobacteriaceae</taxon>
        <taxon>Escherichia</taxon>
    </lineage>
</organism>
<name>THIC_ECOLI</name>
<keyword id="KW-0004">4Fe-4S</keyword>
<keyword id="KW-0408">Iron</keyword>
<keyword id="KW-0411">Iron-sulfur</keyword>
<keyword id="KW-0456">Lyase</keyword>
<keyword id="KW-0479">Metal-binding</keyword>
<keyword id="KW-1185">Reference proteome</keyword>
<keyword id="KW-0949">S-adenosyl-L-methionine</keyword>
<keyword id="KW-0784">Thiamine biosynthesis</keyword>
<keyword id="KW-0862">Zinc</keyword>
<evidence type="ECO:0000255" key="1">
    <source>
        <dbReference type="HAMAP-Rule" id="MF_00089"/>
    </source>
</evidence>
<evidence type="ECO:0000305" key="2"/>
<evidence type="ECO:0000305" key="3">
    <source>
    </source>
</evidence>
<evidence type="ECO:0000305" key="4">
    <source>
    </source>
</evidence>
<accession>P30136</accession>
<accession>Q2M8T1</accession>
<protein>
    <recommendedName>
        <fullName evidence="1">Phosphomethylpyrimidine synthase</fullName>
        <ecNumber evidence="1">4.1.99.17</ecNumber>
    </recommendedName>
    <alternativeName>
        <fullName evidence="1">Hydroxymethylpyrimidine phosphate synthase</fullName>
        <shortName evidence="1">HMP-P synthase</shortName>
        <shortName evidence="1">HMP-phosphate synthase</shortName>
        <shortName evidence="1">HMPP synthase</shortName>
    </alternativeName>
    <alternativeName>
        <fullName evidence="1">Thiamine biosynthesis protein ThiC</fullName>
    </alternativeName>
</protein>
<proteinExistence type="evidence at protein level"/>
<gene>
    <name evidence="1" type="primary">thiC</name>
    <name type="ordered locus">b3994</name>
    <name type="ordered locus">JW3958</name>
</gene>
<dbReference type="EC" id="4.1.99.17" evidence="1"/>
<dbReference type="EMBL" id="M88701">
    <property type="protein sequence ID" value="AAB95616.1"/>
    <property type="molecule type" value="Genomic_DNA"/>
</dbReference>
<dbReference type="EMBL" id="U00006">
    <property type="protein sequence ID" value="AAC43092.1"/>
    <property type="molecule type" value="Genomic_DNA"/>
</dbReference>
<dbReference type="EMBL" id="U00096">
    <property type="protein sequence ID" value="AAC76968.1"/>
    <property type="molecule type" value="Genomic_DNA"/>
</dbReference>
<dbReference type="EMBL" id="AP009048">
    <property type="protein sequence ID" value="BAE77325.1"/>
    <property type="molecule type" value="Genomic_DNA"/>
</dbReference>
<dbReference type="PIR" id="E65206">
    <property type="entry name" value="E65206"/>
</dbReference>
<dbReference type="RefSeq" id="NP_418422.1">
    <property type="nucleotide sequence ID" value="NC_000913.3"/>
</dbReference>
<dbReference type="RefSeq" id="WP_001276926.1">
    <property type="nucleotide sequence ID" value="NZ_STEB01000045.1"/>
</dbReference>
<dbReference type="SMR" id="P30136"/>
<dbReference type="BioGRID" id="4259335">
    <property type="interactions" value="17"/>
</dbReference>
<dbReference type="DIP" id="DIP-10982N"/>
<dbReference type="FunCoup" id="P30136">
    <property type="interactions" value="652"/>
</dbReference>
<dbReference type="IntAct" id="P30136">
    <property type="interactions" value="7"/>
</dbReference>
<dbReference type="STRING" id="511145.b3994"/>
<dbReference type="PaxDb" id="511145-b3994"/>
<dbReference type="EnsemblBacteria" id="AAC76968">
    <property type="protein sequence ID" value="AAC76968"/>
    <property type="gene ID" value="b3994"/>
</dbReference>
<dbReference type="GeneID" id="75205512"/>
<dbReference type="GeneID" id="948492"/>
<dbReference type="KEGG" id="ecj:JW3958"/>
<dbReference type="KEGG" id="eco:b3994"/>
<dbReference type="KEGG" id="ecoc:C3026_21575"/>
<dbReference type="PATRIC" id="fig|1411691.4.peg.2717"/>
<dbReference type="EchoBASE" id="EB1544"/>
<dbReference type="eggNOG" id="COG0422">
    <property type="taxonomic scope" value="Bacteria"/>
</dbReference>
<dbReference type="HOGENOM" id="CLU_013181_2_1_6"/>
<dbReference type="InParanoid" id="P30136"/>
<dbReference type="OMA" id="FDWNKQF"/>
<dbReference type="OrthoDB" id="9805897at2"/>
<dbReference type="PhylomeDB" id="P30136"/>
<dbReference type="BioCyc" id="EcoCyc:THIC-MONOMER"/>
<dbReference type="BioCyc" id="MetaCyc:THIC-MONOMER"/>
<dbReference type="UniPathway" id="UPA00060"/>
<dbReference type="PRO" id="PR:P30136"/>
<dbReference type="Proteomes" id="UP000000625">
    <property type="component" value="Chromosome"/>
</dbReference>
<dbReference type="GO" id="GO:0005829">
    <property type="term" value="C:cytosol"/>
    <property type="evidence" value="ECO:0000314"/>
    <property type="project" value="EcoCyc"/>
</dbReference>
<dbReference type="GO" id="GO:0051539">
    <property type="term" value="F:4 iron, 4 sulfur cluster binding"/>
    <property type="evidence" value="ECO:0007669"/>
    <property type="project" value="UniProtKB-KW"/>
</dbReference>
<dbReference type="GO" id="GO:0016830">
    <property type="term" value="F:carbon-carbon lyase activity"/>
    <property type="evidence" value="ECO:0007669"/>
    <property type="project" value="InterPro"/>
</dbReference>
<dbReference type="GO" id="GO:0008270">
    <property type="term" value="F:zinc ion binding"/>
    <property type="evidence" value="ECO:0007669"/>
    <property type="project" value="UniProtKB-UniRule"/>
</dbReference>
<dbReference type="GO" id="GO:0009228">
    <property type="term" value="P:thiamine biosynthetic process"/>
    <property type="evidence" value="ECO:0000314"/>
    <property type="project" value="EcoCyc"/>
</dbReference>
<dbReference type="GO" id="GO:0009229">
    <property type="term" value="P:thiamine diphosphate biosynthetic process"/>
    <property type="evidence" value="ECO:0007669"/>
    <property type="project" value="UniProtKB-UniRule"/>
</dbReference>
<dbReference type="FunFam" id="3.20.20.540:FF:000001">
    <property type="entry name" value="Phosphomethylpyrimidine synthase"/>
    <property type="match status" value="1"/>
</dbReference>
<dbReference type="Gene3D" id="6.10.250.620">
    <property type="match status" value="1"/>
</dbReference>
<dbReference type="Gene3D" id="3.20.20.540">
    <property type="entry name" value="Radical SAM ThiC family, central domain"/>
    <property type="match status" value="1"/>
</dbReference>
<dbReference type="HAMAP" id="MF_00089">
    <property type="entry name" value="ThiC"/>
    <property type="match status" value="1"/>
</dbReference>
<dbReference type="InterPro" id="IPR037509">
    <property type="entry name" value="ThiC"/>
</dbReference>
<dbReference type="InterPro" id="IPR025747">
    <property type="entry name" value="ThiC-associated_dom"/>
</dbReference>
<dbReference type="InterPro" id="IPR038521">
    <property type="entry name" value="ThiC/Bza_core_dom"/>
</dbReference>
<dbReference type="InterPro" id="IPR002817">
    <property type="entry name" value="ThiC/BzaA/B"/>
</dbReference>
<dbReference type="NCBIfam" id="NF006763">
    <property type="entry name" value="PRK09284.1"/>
    <property type="match status" value="1"/>
</dbReference>
<dbReference type="NCBIfam" id="NF009895">
    <property type="entry name" value="PRK13352.1"/>
    <property type="match status" value="1"/>
</dbReference>
<dbReference type="NCBIfam" id="TIGR00190">
    <property type="entry name" value="thiC"/>
    <property type="match status" value="1"/>
</dbReference>
<dbReference type="PANTHER" id="PTHR30557:SF1">
    <property type="entry name" value="PHOSPHOMETHYLPYRIMIDINE SYNTHASE, CHLOROPLASTIC"/>
    <property type="match status" value="1"/>
</dbReference>
<dbReference type="PANTHER" id="PTHR30557">
    <property type="entry name" value="THIAMINE BIOSYNTHESIS PROTEIN THIC"/>
    <property type="match status" value="1"/>
</dbReference>
<dbReference type="Pfam" id="PF13667">
    <property type="entry name" value="ThiC-associated"/>
    <property type="match status" value="1"/>
</dbReference>
<dbReference type="Pfam" id="PF01964">
    <property type="entry name" value="ThiC_Rad_SAM"/>
    <property type="match status" value="1"/>
</dbReference>
<dbReference type="SFLD" id="SFLDF00407">
    <property type="entry name" value="phosphomethylpyrimidine_syntha"/>
    <property type="match status" value="1"/>
</dbReference>
<dbReference type="SFLD" id="SFLDG01114">
    <property type="entry name" value="phosphomethylpyrimidine_syntha"/>
    <property type="match status" value="1"/>
</dbReference>
<dbReference type="SFLD" id="SFLDS00113">
    <property type="entry name" value="Radical_SAM_Phosphomethylpyrim"/>
    <property type="match status" value="1"/>
</dbReference>